<gene>
    <name type="primary">Kdm3a</name>
    <name type="synonym">Jhdm2a</name>
    <name type="synonym">Jmjd1a</name>
    <name type="synonym">Tsga</name>
</gene>
<organism>
    <name type="scientific">Rattus norvegicus</name>
    <name type="common">Rat</name>
    <dbReference type="NCBI Taxonomy" id="10116"/>
    <lineage>
        <taxon>Eukaryota</taxon>
        <taxon>Metazoa</taxon>
        <taxon>Chordata</taxon>
        <taxon>Craniata</taxon>
        <taxon>Vertebrata</taxon>
        <taxon>Euteleostomi</taxon>
        <taxon>Mammalia</taxon>
        <taxon>Eutheria</taxon>
        <taxon>Euarchontoglires</taxon>
        <taxon>Glires</taxon>
        <taxon>Rodentia</taxon>
        <taxon>Myomorpha</taxon>
        <taxon>Muroidea</taxon>
        <taxon>Muridae</taxon>
        <taxon>Murinae</taxon>
        <taxon>Rattus</taxon>
    </lineage>
</organism>
<comment type="function">
    <text evidence="1">Histone demethylase that specifically demethylates 'Lys-9' of histone H3, thereby playing a central role in histone code. Preferentially demethylates mono- and dimethylated H3 'Lys-9' residue, with a preference for dimethylated residue, while it has weak or no activity on trimethylated H3 'Lys-9'. Demethylation of Lys residue generates formaldehyde and succinate. Involved in hormone-dependent transcriptional activation, by participating in recruitment to androgen-receptor target genes, resulting in H3 'Lys-9' demethylation and transcriptional activation. Involved in spermatogenesis by regulating expression of target genes such as PRM1 and TNP1 which are required for packaging and condensation of sperm chromatin. Directly regulates expression of PPARA and UCP1 and is involved in obesity resistance (By similarity).</text>
</comment>
<comment type="catalytic activity">
    <reaction evidence="2">
        <text>N(6),N(6)-dimethyl-L-lysyl(9)-[histone H3] + 2 2-oxoglutarate + 2 O2 = L-lysyl(9)-[histone H3] + 2 formaldehyde + 2 succinate + 2 CO2</text>
        <dbReference type="Rhea" id="RHEA:60188"/>
        <dbReference type="Rhea" id="RHEA-COMP:15541"/>
        <dbReference type="Rhea" id="RHEA-COMP:15546"/>
        <dbReference type="ChEBI" id="CHEBI:15379"/>
        <dbReference type="ChEBI" id="CHEBI:16526"/>
        <dbReference type="ChEBI" id="CHEBI:16810"/>
        <dbReference type="ChEBI" id="CHEBI:16842"/>
        <dbReference type="ChEBI" id="CHEBI:29969"/>
        <dbReference type="ChEBI" id="CHEBI:30031"/>
        <dbReference type="ChEBI" id="CHEBI:61976"/>
        <dbReference type="EC" id="1.14.11.65"/>
    </reaction>
</comment>
<comment type="cofactor">
    <cofactor evidence="1">
        <name>Fe(2+)</name>
        <dbReference type="ChEBI" id="CHEBI:29033"/>
    </cofactor>
    <text evidence="1">Binds 1 Fe(2+) ion per subunit.</text>
</comment>
<comment type="subunit">
    <text evidence="2">Interacts with VRK1.</text>
</comment>
<comment type="subcellular location">
    <subcellularLocation>
        <location evidence="1">Cytoplasm</location>
    </subcellularLocation>
    <subcellularLocation>
        <location evidence="1">Nucleus</location>
    </subcellularLocation>
    <text evidence="1">Nuclear in round spermatids. When spermatids start to elongate, localizes to the cytoplasm where it forms distinct foci which disappear in mature spermatozoa (By similarity).</text>
</comment>
<comment type="tissue specificity">
    <text>Testis specific. Expressed only in male germ cells.</text>
</comment>
<comment type="developmental stage">
    <text>Reaches a maximum during the meiotic and the postmeiotic stages of germ cell development.</text>
</comment>
<comment type="domain">
    <text evidence="1">The JmjC domain and the C6-type zinc-finger are required for the demethylation activity.</text>
</comment>
<comment type="domain">
    <text evidence="1">Leu-Xaa-Xaa-Leu-Leu (LXXLL) motifs are known to mediate the association with nuclear receptors.</text>
</comment>
<comment type="similarity">
    <text evidence="6">Belongs to the JHDM2 histone demethylase family.</text>
</comment>
<proteinExistence type="evidence at transcript level"/>
<feature type="chain" id="PRO_0000084287" description="Lysine-specific demethylase 3A">
    <location>
        <begin position="1"/>
        <end position="1214"/>
    </location>
</feature>
<feature type="domain" description="JmjC" evidence="4">
    <location>
        <begin position="944"/>
        <end position="1167"/>
    </location>
</feature>
<feature type="zinc finger region" description="C6-type" evidence="3">
    <location>
        <begin position="546"/>
        <end position="571"/>
    </location>
</feature>
<feature type="region of interest" description="Disordered" evidence="5">
    <location>
        <begin position="194"/>
        <end position="215"/>
    </location>
</feature>
<feature type="region of interest" description="Disordered" evidence="5">
    <location>
        <begin position="271"/>
        <end position="293"/>
    </location>
</feature>
<feature type="region of interest" description="Disordered" evidence="5">
    <location>
        <begin position="310"/>
        <end position="398"/>
    </location>
</feature>
<feature type="short sequence motif" description="LXXLL motif">
    <location>
        <begin position="769"/>
        <end position="773"/>
    </location>
</feature>
<feature type="compositionally biased region" description="Polar residues" evidence="5">
    <location>
        <begin position="194"/>
        <end position="211"/>
    </location>
</feature>
<feature type="compositionally biased region" description="Polar residues" evidence="5">
    <location>
        <begin position="361"/>
        <end position="370"/>
    </location>
</feature>
<feature type="compositionally biased region" description="Basic and acidic residues" evidence="5">
    <location>
        <begin position="371"/>
        <end position="380"/>
    </location>
</feature>
<feature type="compositionally biased region" description="Polar residues" evidence="5">
    <location>
        <begin position="381"/>
        <end position="391"/>
    </location>
</feature>
<feature type="binding site" evidence="4">
    <location>
        <position position="1006"/>
    </location>
    <ligand>
        <name>Fe cation</name>
        <dbReference type="ChEBI" id="CHEBI:24875"/>
        <note>catalytic</note>
    </ligand>
</feature>
<feature type="binding site" evidence="4">
    <location>
        <position position="1008"/>
    </location>
    <ligand>
        <name>Fe cation</name>
        <dbReference type="ChEBI" id="CHEBI:24875"/>
        <note>catalytic</note>
    </ligand>
</feature>
<feature type="binding site" evidence="4">
    <location>
        <position position="1135"/>
    </location>
    <ligand>
        <name>Fe cation</name>
        <dbReference type="ChEBI" id="CHEBI:24875"/>
        <note>catalytic</note>
    </ligand>
</feature>
<feature type="modified residue" description="Phosphoserine" evidence="2">
    <location>
        <position position="150"/>
    </location>
</feature>
<feature type="modified residue" description="Phosphoserine" evidence="2">
    <location>
        <position position="209"/>
    </location>
</feature>
<feature type="modified residue" description="Phosphoserine" evidence="2">
    <location>
        <position position="330"/>
    </location>
</feature>
<feature type="modified residue" description="N6-acetyllysine" evidence="2">
    <location>
        <position position="779"/>
    </location>
</feature>
<evidence type="ECO:0000250" key="1"/>
<evidence type="ECO:0000250" key="2">
    <source>
        <dbReference type="UniProtKB" id="Q9Y4C1"/>
    </source>
</evidence>
<evidence type="ECO:0000255" key="3"/>
<evidence type="ECO:0000255" key="4">
    <source>
        <dbReference type="PROSITE-ProRule" id="PRU00538"/>
    </source>
</evidence>
<evidence type="ECO:0000256" key="5">
    <source>
        <dbReference type="SAM" id="MobiDB-lite"/>
    </source>
</evidence>
<evidence type="ECO:0000305" key="6"/>
<reference key="1">
    <citation type="journal article" date="1991" name="Mol. Reprod. Dev.">
        <title>Analysis of a murine male germ cell-specific transcript that encodes a putative zinc finger protein.</title>
        <authorList>
            <person name="Hoog C."/>
            <person name="Schalling M."/>
            <person name="Brundell E."/>
            <person name="Daneholt B."/>
        </authorList>
    </citation>
    <scope>NUCLEOTIDE SEQUENCE [MRNA]</scope>
    <source>
        <strain>Sprague-Dawley</strain>
        <tissue>Testis</tissue>
    </source>
</reference>
<name>KDM3A_RAT</name>
<keyword id="KW-0007">Acetylation</keyword>
<keyword id="KW-0010">Activator</keyword>
<keyword id="KW-0156">Chromatin regulator</keyword>
<keyword id="KW-0963">Cytoplasm</keyword>
<keyword id="KW-0221">Differentiation</keyword>
<keyword id="KW-0223">Dioxygenase</keyword>
<keyword id="KW-0408">Iron</keyword>
<keyword id="KW-0479">Metal-binding</keyword>
<keyword id="KW-0539">Nucleus</keyword>
<keyword id="KW-0560">Oxidoreductase</keyword>
<keyword id="KW-0597">Phosphoprotein</keyword>
<keyword id="KW-1185">Reference proteome</keyword>
<keyword id="KW-0744">Spermatogenesis</keyword>
<keyword id="KW-0804">Transcription</keyword>
<keyword id="KW-0805">Transcription regulation</keyword>
<keyword id="KW-0862">Zinc</keyword>
<keyword id="KW-0863">Zinc-finger</keyword>
<sequence length="1214" mass="135404">MYKSLLDKAGLGSITSVRFLGDQQSVFVSKDLLKPIQDVNSLRLSLTDNQTVSKEFQALIVKHLDESHLLQGDKNLVGSEVRIYSLDPSTQWFSATVVHGNPSSKTLQVNCEEIPALKIVDPALIHVEVVHDNFVTCGNSTRIGAVKRKSSENNGSSVSKQAKSCSEVSPSMCPVQSVPTTVCKEILLGCTAATPSSNRQQNTPQAANSPPNIGAKLPQGCHKQSLPEEISSCLNTKSEVLRTKPDVCKAGLLSSKSSQVGAGDLKILSEPKGSCIQPKTNTDQESRLESTPQPVTGLTKECLVTKTSSKAELDNATAPELQKRLEHTASTPDGLSDKPEVEAGVTRLNSCSEKKVGPSDLGSQSQNLKETSVKVDHDSCCTRSSNKTQTPPARKSVLTDPDKLKKLQQSGEAFVQDDSCVNIVAQLPKCRECRLDSLRKDKDQQKDSPVFCRFFHFRRLQFNKHGVLRVEGFLTPNKYDSEAIGLWLPLTKNVVGTDLDTAKYILANIGDHFCQMVISEKEAMSTIEPHRQVAWKRAVKGVREMCDVCDTTIFNLHWVCPRCGFGVCVDCYRLKRKNCQQGAAYKTFSWIRCVKSQIHEPENLMPTQIIPGKALYDVGDIVHSVRAKWGIKANCPCSNRQFKLFSKPALKEDLKQASLSGEKPSLGTMVQQSSPVLEPAAVCGEAPSKPASNVKPICPANTSPLNWLADLTSGNVNKENKEKQLTMPILKNEIKCLPPLPPLNKSSTVLHTFNSTILTPVSNNNSGFLRNLLNSSTGKTENGLKNTPKILDDIFASLVQNKTSSDLSKRPQGLTIKPSILGFDTPHYWLCDNRLLCLQDPNNKSNWNVFRECWKQGQPVMVSGVHHKLNTELWKPESFRKEFGEQEVDLVNCRTNEIITGATVGDFWDGFEDVPNRLKNEKEKEPMVLKLKDWPPGEDFRDMMPSRFDDLMANIPLPEYTRRDGKLNLASRLPNYFVRPDLGPKMYNAYGLITPEDRKYGTTNLHLDVSDAANVMVYVGIPKGQCEQEEEVLRTIQDGDSDELTIKRFIEGKEKPGALWHIYAAKDTEKIREFLKKVSEEQGQENPADHDPIHDQSWYLDRSLRKRLYQEYGVQGWAIVQFLGDVVFIPAGAPHQVHNLYSCIKVAEDFVSPEHVKHCFWLTQEFRHLSQTHTNHEDKLQVKNVIYHAVKDAVAMLKAVNPVWANVNSSAHWR</sequence>
<dbReference type="EC" id="1.14.11.65" evidence="2"/>
<dbReference type="EMBL" id="X59993">
    <property type="protein sequence ID" value="CAA42610.1"/>
    <property type="molecule type" value="mRNA"/>
</dbReference>
<dbReference type="PIR" id="S28499">
    <property type="entry name" value="S28499"/>
</dbReference>
<dbReference type="RefSeq" id="NP_786940.1">
    <property type="nucleotide sequence ID" value="NM_175764.2"/>
</dbReference>
<dbReference type="SMR" id="Q63679"/>
<dbReference type="BioGRID" id="260178">
    <property type="interactions" value="1"/>
</dbReference>
<dbReference type="FunCoup" id="Q63679">
    <property type="interactions" value="1960"/>
</dbReference>
<dbReference type="STRING" id="10116.ENSRNOP00000072073"/>
<dbReference type="GlyGen" id="Q63679">
    <property type="glycosylation" value="1 site"/>
</dbReference>
<dbReference type="PhosphoSitePlus" id="Q63679"/>
<dbReference type="PaxDb" id="10116-ENSRNOP00000041218"/>
<dbReference type="GeneID" id="312440"/>
<dbReference type="KEGG" id="rno:312440"/>
<dbReference type="UCSC" id="RGD:708351">
    <property type="organism name" value="rat"/>
</dbReference>
<dbReference type="AGR" id="RGD:708351"/>
<dbReference type="CTD" id="55818"/>
<dbReference type="RGD" id="708351">
    <property type="gene designation" value="Kdm3a"/>
</dbReference>
<dbReference type="eggNOG" id="KOG1356">
    <property type="taxonomic scope" value="Eukaryota"/>
</dbReference>
<dbReference type="InParanoid" id="Q63679"/>
<dbReference type="OrthoDB" id="1667110at2759"/>
<dbReference type="Reactome" id="R-RNO-3214842">
    <property type="pathway name" value="HDMs demethylate histones"/>
</dbReference>
<dbReference type="PRO" id="PR:Q63679"/>
<dbReference type="Proteomes" id="UP000002494">
    <property type="component" value="Unplaced"/>
</dbReference>
<dbReference type="GO" id="GO:0000785">
    <property type="term" value="C:chromatin"/>
    <property type="evidence" value="ECO:0000318"/>
    <property type="project" value="GO_Central"/>
</dbReference>
<dbReference type="GO" id="GO:0005737">
    <property type="term" value="C:cytoplasm"/>
    <property type="evidence" value="ECO:0000266"/>
    <property type="project" value="RGD"/>
</dbReference>
<dbReference type="GO" id="GO:0000118">
    <property type="term" value="C:histone deacetylase complex"/>
    <property type="evidence" value="ECO:0000318"/>
    <property type="project" value="GO_Central"/>
</dbReference>
<dbReference type="GO" id="GO:0001673">
    <property type="term" value="C:male germ cell nucleus"/>
    <property type="evidence" value="ECO:0000266"/>
    <property type="project" value="RGD"/>
</dbReference>
<dbReference type="GO" id="GO:0005634">
    <property type="term" value="C:nucleus"/>
    <property type="evidence" value="ECO:0000266"/>
    <property type="project" value="RGD"/>
</dbReference>
<dbReference type="GO" id="GO:0003682">
    <property type="term" value="F:chromatin binding"/>
    <property type="evidence" value="ECO:0000266"/>
    <property type="project" value="RGD"/>
</dbReference>
<dbReference type="GO" id="GO:0031490">
    <property type="term" value="F:chromatin DNA binding"/>
    <property type="evidence" value="ECO:0000318"/>
    <property type="project" value="GO_Central"/>
</dbReference>
<dbReference type="GO" id="GO:0032454">
    <property type="term" value="F:histone H3K9 demethylase activity"/>
    <property type="evidence" value="ECO:0000266"/>
    <property type="project" value="RGD"/>
</dbReference>
<dbReference type="GO" id="GO:0140683">
    <property type="term" value="F:histone H3K9me/H3K9me2 demethylase activity"/>
    <property type="evidence" value="ECO:0000266"/>
    <property type="project" value="RGD"/>
</dbReference>
<dbReference type="GO" id="GO:0005506">
    <property type="term" value="F:iron ion binding"/>
    <property type="evidence" value="ECO:0000266"/>
    <property type="project" value="RGD"/>
</dbReference>
<dbReference type="GO" id="GO:0050681">
    <property type="term" value="F:nuclear androgen receptor binding"/>
    <property type="evidence" value="ECO:0000266"/>
    <property type="project" value="RGD"/>
</dbReference>
<dbReference type="GO" id="GO:0003712">
    <property type="term" value="F:transcription coregulator activity"/>
    <property type="evidence" value="ECO:0000266"/>
    <property type="project" value="RGD"/>
</dbReference>
<dbReference type="GO" id="GO:0008270">
    <property type="term" value="F:zinc ion binding"/>
    <property type="evidence" value="ECO:0007669"/>
    <property type="project" value="UniProtKB-KW"/>
</dbReference>
<dbReference type="GO" id="GO:0030521">
    <property type="term" value="P:androgen receptor signaling pathway"/>
    <property type="evidence" value="ECO:0000266"/>
    <property type="project" value="RGD"/>
</dbReference>
<dbReference type="GO" id="GO:1990830">
    <property type="term" value="P:cellular response to leukemia inhibitory factor"/>
    <property type="evidence" value="ECO:0000266"/>
    <property type="project" value="RGD"/>
</dbReference>
<dbReference type="GO" id="GO:0046293">
    <property type="term" value="P:formaldehyde biosynthetic process"/>
    <property type="evidence" value="ECO:0000266"/>
    <property type="project" value="RGD"/>
</dbReference>
<dbReference type="GO" id="GO:0009755">
    <property type="term" value="P:hormone-mediated signaling pathway"/>
    <property type="evidence" value="ECO:0000266"/>
    <property type="project" value="RGD"/>
</dbReference>
<dbReference type="GO" id="GO:0008584">
    <property type="term" value="P:male gonad development"/>
    <property type="evidence" value="ECO:0000270"/>
    <property type="project" value="RGD"/>
</dbReference>
<dbReference type="GO" id="GO:0120162">
    <property type="term" value="P:positive regulation of cold-induced thermogenesis"/>
    <property type="evidence" value="ECO:0000250"/>
    <property type="project" value="YuBioLab"/>
</dbReference>
<dbReference type="GO" id="GO:0045893">
    <property type="term" value="P:positive regulation of DNA-templated transcription"/>
    <property type="evidence" value="ECO:0000266"/>
    <property type="project" value="RGD"/>
</dbReference>
<dbReference type="GO" id="GO:0010628">
    <property type="term" value="P:positive regulation of gene expression"/>
    <property type="evidence" value="ECO:0000315"/>
    <property type="project" value="RGD"/>
</dbReference>
<dbReference type="GO" id="GO:0045944">
    <property type="term" value="P:positive regulation of transcription by RNA polymerase II"/>
    <property type="evidence" value="ECO:0000266"/>
    <property type="project" value="RGD"/>
</dbReference>
<dbReference type="GO" id="GO:0010468">
    <property type="term" value="P:regulation of gene expression"/>
    <property type="evidence" value="ECO:0000266"/>
    <property type="project" value="RGD"/>
</dbReference>
<dbReference type="GO" id="GO:2000736">
    <property type="term" value="P:regulation of stem cell differentiation"/>
    <property type="evidence" value="ECO:0000266"/>
    <property type="project" value="RGD"/>
</dbReference>
<dbReference type="GO" id="GO:2000036">
    <property type="term" value="P:regulation of stem cell population maintenance"/>
    <property type="evidence" value="ECO:0000266"/>
    <property type="project" value="RGD"/>
</dbReference>
<dbReference type="GO" id="GO:0006357">
    <property type="term" value="P:regulation of transcription by RNA polymerase II"/>
    <property type="evidence" value="ECO:0000318"/>
    <property type="project" value="GO_Central"/>
</dbReference>
<dbReference type="GO" id="GO:0001666">
    <property type="term" value="P:response to hypoxia"/>
    <property type="evidence" value="ECO:0000270"/>
    <property type="project" value="RGD"/>
</dbReference>
<dbReference type="GO" id="GO:0007290">
    <property type="term" value="P:spermatid nucleus elongation"/>
    <property type="evidence" value="ECO:0000266"/>
    <property type="project" value="RGD"/>
</dbReference>
<dbReference type="GO" id="GO:0007283">
    <property type="term" value="P:spermatogenesis"/>
    <property type="evidence" value="ECO:0000266"/>
    <property type="project" value="RGD"/>
</dbReference>
<dbReference type="FunFam" id="2.60.120.650:FF:000004">
    <property type="entry name" value="Putative lysine-specific demethylase 3B"/>
    <property type="match status" value="1"/>
</dbReference>
<dbReference type="Gene3D" id="2.60.120.650">
    <property type="entry name" value="Cupin"/>
    <property type="match status" value="1"/>
</dbReference>
<dbReference type="InterPro" id="IPR045109">
    <property type="entry name" value="JHDM2-like"/>
</dbReference>
<dbReference type="InterPro" id="IPR003347">
    <property type="entry name" value="JmjC_dom"/>
</dbReference>
<dbReference type="InterPro" id="IPR054503">
    <property type="entry name" value="KDM3AB_Tudor"/>
</dbReference>
<dbReference type="InterPro" id="IPR054504">
    <property type="entry name" value="PWWP_KDM3B"/>
</dbReference>
<dbReference type="PANTHER" id="PTHR12549">
    <property type="entry name" value="JMJC DOMAIN-CONTAINING HISTONE DEMETHYLATION PROTEIN"/>
    <property type="match status" value="1"/>
</dbReference>
<dbReference type="PANTHER" id="PTHR12549:SF7">
    <property type="entry name" value="LYSINE-SPECIFIC DEMETHYLASE 3A"/>
    <property type="match status" value="1"/>
</dbReference>
<dbReference type="Pfam" id="PF02373">
    <property type="entry name" value="JmjC"/>
    <property type="match status" value="1"/>
</dbReference>
<dbReference type="Pfam" id="PF22988">
    <property type="entry name" value="PWWP_KDM3B"/>
    <property type="match status" value="1"/>
</dbReference>
<dbReference type="Pfam" id="PF22987">
    <property type="entry name" value="Tudor_KDM3B"/>
    <property type="match status" value="1"/>
</dbReference>
<dbReference type="SMART" id="SM00558">
    <property type="entry name" value="JmjC"/>
    <property type="match status" value="1"/>
</dbReference>
<dbReference type="SUPFAM" id="SSF51197">
    <property type="entry name" value="Clavaminate synthase-like"/>
    <property type="match status" value="1"/>
</dbReference>
<dbReference type="PROSITE" id="PS51184">
    <property type="entry name" value="JMJC"/>
    <property type="match status" value="1"/>
</dbReference>
<protein>
    <recommendedName>
        <fullName>Lysine-specific demethylase 3A</fullName>
        <ecNumber evidence="2">1.14.11.65</ecNumber>
    </recommendedName>
    <alternativeName>
        <fullName>JmjC domain-containing histone demethylation protein 2A</fullName>
    </alternativeName>
    <alternativeName>
        <fullName>Jumonji domain-containing protein 1A</fullName>
    </alternativeName>
    <alternativeName>
        <fullName>Testis-specific gene A protein</fullName>
    </alternativeName>
    <alternativeName>
        <fullName>Zinc finger protein TSGA</fullName>
    </alternativeName>
    <alternativeName>
        <fullName evidence="6">[histone H3]-dimethyl-L-lysine(9) demethylase 3A</fullName>
    </alternativeName>
</protein>
<accession>Q63679</accession>